<accession>A5U669</accession>
<keyword id="KW-0349">Heme</keyword>
<keyword id="KW-0408">Iron</keyword>
<keyword id="KW-0413">Isomerase</keyword>
<keyword id="KW-0479">Metal-binding</keyword>
<keyword id="KW-1185">Reference proteome</keyword>
<reference key="1">
    <citation type="journal article" date="2008" name="PLoS ONE">
        <title>Genetic basis of virulence attenuation revealed by comparative genomic analysis of Mycobacterium tuberculosis strain H37Ra versus H37Rv.</title>
        <authorList>
            <person name="Zheng H."/>
            <person name="Lu L."/>
            <person name="Wang B."/>
            <person name="Pu S."/>
            <person name="Zhang X."/>
            <person name="Zhu G."/>
            <person name="Shi W."/>
            <person name="Zhang L."/>
            <person name="Wang H."/>
            <person name="Wang S."/>
            <person name="Zhao G."/>
            <person name="Zhang Y."/>
        </authorList>
    </citation>
    <scope>NUCLEOTIDE SEQUENCE [LARGE SCALE GENOMIC DNA]</scope>
    <source>
        <strain>ATCC 25177 / H37Ra</strain>
    </source>
</reference>
<organism>
    <name type="scientific">Mycobacterium tuberculosis (strain ATCC 25177 / H37Ra)</name>
    <dbReference type="NCBI Taxonomy" id="419947"/>
    <lineage>
        <taxon>Bacteria</taxon>
        <taxon>Bacillati</taxon>
        <taxon>Actinomycetota</taxon>
        <taxon>Actinomycetes</taxon>
        <taxon>Mycobacteriales</taxon>
        <taxon>Mycobacteriaceae</taxon>
        <taxon>Mycobacterium</taxon>
        <taxon>Mycobacterium tuberculosis complex</taxon>
    </lineage>
</organism>
<gene>
    <name type="ordered locus">MRA_2745</name>
</gene>
<protein>
    <recommendedName>
        <fullName>Peroxynitrite isomerase 1</fullName>
        <ecNumber evidence="1">5.99.-.-</ecNumber>
    </recommendedName>
    <alternativeName>
        <fullName>Ferric nitrobindin</fullName>
        <shortName>Nb(III)</shortName>
    </alternativeName>
</protein>
<sequence length="164" mass="17846">MTRDLAPALQALSPLLGSWAGRGAGKYPTIRPFEYLEEVVFAHVGKPFLTYTQQTRAVADGKPLHSETGYLRVCRPGCVELVLAHPSGITEIEVGTYSVTGDVIELELSTRADGSIGLAPTAKEVTALDRSYRIDGDELSYSLQMRAVGQPLQDHLAAVLHRQR</sequence>
<dbReference type="EC" id="5.99.-.-" evidence="1"/>
<dbReference type="EMBL" id="CP000611">
    <property type="protein sequence ID" value="ABQ74519.1"/>
    <property type="molecule type" value="Genomic_DNA"/>
</dbReference>
<dbReference type="RefSeq" id="WP_003900559.1">
    <property type="nucleotide sequence ID" value="NZ_CP016972.1"/>
</dbReference>
<dbReference type="SMR" id="A5U669"/>
<dbReference type="KEGG" id="mra:MRA_2745"/>
<dbReference type="eggNOG" id="COG4044">
    <property type="taxonomic scope" value="Bacteria"/>
</dbReference>
<dbReference type="HOGENOM" id="CLU_085483_1_0_11"/>
<dbReference type="Proteomes" id="UP000001988">
    <property type="component" value="Chromosome"/>
</dbReference>
<dbReference type="GO" id="GO:0020037">
    <property type="term" value="F:heme binding"/>
    <property type="evidence" value="ECO:0007669"/>
    <property type="project" value="UniProtKB-UniRule"/>
</dbReference>
<dbReference type="GO" id="GO:0046872">
    <property type="term" value="F:metal ion binding"/>
    <property type="evidence" value="ECO:0007669"/>
    <property type="project" value="UniProtKB-KW"/>
</dbReference>
<dbReference type="GO" id="GO:0062213">
    <property type="term" value="F:peroxynitrite isomerase activity"/>
    <property type="evidence" value="ECO:0007669"/>
    <property type="project" value="UniProtKB-UniRule"/>
</dbReference>
<dbReference type="CDD" id="cd07828">
    <property type="entry name" value="lipocalin_heme-bd-THAP4-like"/>
    <property type="match status" value="1"/>
</dbReference>
<dbReference type="Gene3D" id="2.40.128.20">
    <property type="match status" value="1"/>
</dbReference>
<dbReference type="HAMAP" id="MF_01297">
    <property type="entry name" value="nitrobindin"/>
    <property type="match status" value="1"/>
</dbReference>
<dbReference type="InterPro" id="IPR012674">
    <property type="entry name" value="Calycin"/>
</dbReference>
<dbReference type="InterPro" id="IPR022939">
    <property type="entry name" value="Nb(III)_bact/plant"/>
</dbReference>
<dbReference type="InterPro" id="IPR045165">
    <property type="entry name" value="Nitrobindin"/>
</dbReference>
<dbReference type="InterPro" id="IPR054873">
    <property type="entry name" value="PeroxynitIsom"/>
</dbReference>
<dbReference type="InterPro" id="IPR014878">
    <property type="entry name" value="THAP4-like_heme-bd"/>
</dbReference>
<dbReference type="NCBIfam" id="NF045819">
    <property type="entry name" value="PeroxynitIsom"/>
    <property type="match status" value="1"/>
</dbReference>
<dbReference type="PANTHER" id="PTHR15854:SF4">
    <property type="entry name" value="PEROXYNITRITE ISOMERASE THAP4"/>
    <property type="match status" value="1"/>
</dbReference>
<dbReference type="PANTHER" id="PTHR15854">
    <property type="entry name" value="THAP4 PROTEIN"/>
    <property type="match status" value="1"/>
</dbReference>
<dbReference type="Pfam" id="PF08768">
    <property type="entry name" value="THAP4_heme-bd"/>
    <property type="match status" value="1"/>
</dbReference>
<dbReference type="SUPFAM" id="SSF50814">
    <property type="entry name" value="Lipocalins"/>
    <property type="match status" value="1"/>
</dbReference>
<feature type="chain" id="PRO_0000356936" description="Peroxynitrite isomerase 1">
    <location>
        <begin position="1"/>
        <end position="164"/>
    </location>
</feature>
<feature type="short sequence motif" description="GXWXGXG" evidence="1">
    <location>
        <begin position="17"/>
        <end position="23"/>
    </location>
</feature>
<feature type="binding site" description="axial binding residue" evidence="1">
    <location>
        <position position="155"/>
    </location>
    <ligand>
        <name>heme b</name>
        <dbReference type="ChEBI" id="CHEBI:60344"/>
    </ligand>
    <ligandPart>
        <name>Fe</name>
        <dbReference type="ChEBI" id="CHEBI:18248"/>
    </ligandPart>
</feature>
<name>NB1_MYCTA</name>
<proteinExistence type="inferred from homology"/>
<comment type="function">
    <text evidence="1">Heme-binding protein able to scavenge peroxynitrite and to protect free L-tyrosine against peroxynitrite-mediated nitration, by acting as a peroxynitrite isomerase that converts peroxynitrite to nitrate. Therefore, this protein likely plays a role in peroxynitrite sensing and in the detoxification of reactive nitrogen and oxygen species (RNS and ROS, respectively). Is able to bind nitric oxide (NO) in vitro, but may act as a sensor of peroxynitrite levels in vivo.</text>
</comment>
<comment type="catalytic activity">
    <reaction evidence="1">
        <text>peroxynitrite = nitrate</text>
        <dbReference type="Rhea" id="RHEA:63116"/>
        <dbReference type="ChEBI" id="CHEBI:17632"/>
        <dbReference type="ChEBI" id="CHEBI:25941"/>
    </reaction>
    <physiologicalReaction direction="left-to-right" evidence="1">
        <dbReference type="Rhea" id="RHEA:63117"/>
    </physiologicalReaction>
</comment>
<comment type="cofactor">
    <cofactor evidence="1">
        <name>heme b</name>
        <dbReference type="ChEBI" id="CHEBI:60344"/>
    </cofactor>
    <text evidence="1">Binds 1 heme b group per subunit, that coordinates a highly solvent-exposed Fe(III) atom.</text>
</comment>
<comment type="pathway">
    <text evidence="1">Nitrogen metabolism.</text>
</comment>
<comment type="subunit">
    <text evidence="1">Homodimer.</text>
</comment>
<comment type="domain">
    <text evidence="1">Forms a 10-stranded antiparallel beta-barrel structure able to accommodate a hydrophobic ligand in its interior. In fact, this fold hosts the heme group, which is located in a wide surface cleft.</text>
</comment>
<comment type="similarity">
    <text evidence="1">Belongs to the nitrobindin family.</text>
</comment>
<evidence type="ECO:0000255" key="1">
    <source>
        <dbReference type="HAMAP-Rule" id="MF_01297"/>
    </source>
</evidence>